<name>EFPL_SALPB</name>
<dbReference type="EMBL" id="CP000886">
    <property type="protein sequence ID" value="ABX66217.1"/>
    <property type="status" value="ALT_INIT"/>
    <property type="molecule type" value="Genomic_DNA"/>
</dbReference>
<dbReference type="RefSeq" id="WP_001136822.1">
    <property type="nucleotide sequence ID" value="NC_010102.1"/>
</dbReference>
<dbReference type="SMR" id="A9N6H3"/>
<dbReference type="GeneID" id="66756682"/>
<dbReference type="KEGG" id="spq:SPAB_00793"/>
<dbReference type="PATRIC" id="fig|1016998.12.peg.743"/>
<dbReference type="HOGENOM" id="CLU_074944_2_0_6"/>
<dbReference type="BioCyc" id="SENT1016998:SPAB_RS03290-MONOMER"/>
<dbReference type="Proteomes" id="UP000008556">
    <property type="component" value="Chromosome"/>
</dbReference>
<dbReference type="GO" id="GO:0005829">
    <property type="term" value="C:cytosol"/>
    <property type="evidence" value="ECO:0007669"/>
    <property type="project" value="UniProtKB-ARBA"/>
</dbReference>
<dbReference type="GO" id="GO:0003746">
    <property type="term" value="F:translation elongation factor activity"/>
    <property type="evidence" value="ECO:0007669"/>
    <property type="project" value="UniProtKB-UniRule"/>
</dbReference>
<dbReference type="GO" id="GO:0043043">
    <property type="term" value="P:peptide biosynthetic process"/>
    <property type="evidence" value="ECO:0007669"/>
    <property type="project" value="InterPro"/>
</dbReference>
<dbReference type="CDD" id="cd04470">
    <property type="entry name" value="S1_EF-P_repeat_1"/>
    <property type="match status" value="1"/>
</dbReference>
<dbReference type="CDD" id="cd05794">
    <property type="entry name" value="S1_EF-P_repeat_2"/>
    <property type="match status" value="1"/>
</dbReference>
<dbReference type="FunFam" id="2.40.50.140:FF:000004">
    <property type="entry name" value="Elongation factor P"/>
    <property type="match status" value="1"/>
</dbReference>
<dbReference type="FunFam" id="2.30.30.30:FF:000011">
    <property type="entry name" value="Elongation factor P-like protein"/>
    <property type="match status" value="1"/>
</dbReference>
<dbReference type="FunFam" id="2.40.50.140:FF:000053">
    <property type="entry name" value="Elongation factor P-like protein"/>
    <property type="match status" value="1"/>
</dbReference>
<dbReference type="Gene3D" id="2.30.30.30">
    <property type="match status" value="1"/>
</dbReference>
<dbReference type="Gene3D" id="2.40.50.140">
    <property type="entry name" value="Nucleic acid-binding proteins"/>
    <property type="match status" value="2"/>
</dbReference>
<dbReference type="HAMAP" id="MF_00646">
    <property type="entry name" value="EFP"/>
    <property type="match status" value="1"/>
</dbReference>
<dbReference type="InterPro" id="IPR015365">
    <property type="entry name" value="Elong-fact-P_C"/>
</dbReference>
<dbReference type="InterPro" id="IPR012340">
    <property type="entry name" value="NA-bd_OB-fold"/>
</dbReference>
<dbReference type="InterPro" id="IPR014722">
    <property type="entry name" value="Rib_uL2_dom2"/>
</dbReference>
<dbReference type="InterPro" id="IPR020599">
    <property type="entry name" value="Transl_elong_fac_P/YeiP"/>
</dbReference>
<dbReference type="InterPro" id="IPR013185">
    <property type="entry name" value="Transl_elong_KOW-like"/>
</dbReference>
<dbReference type="InterPro" id="IPR011897">
    <property type="entry name" value="Transl_elong_p-like_YeiP"/>
</dbReference>
<dbReference type="InterPro" id="IPR001059">
    <property type="entry name" value="Transl_elong_P/YeiP_cen"/>
</dbReference>
<dbReference type="InterPro" id="IPR013852">
    <property type="entry name" value="Transl_elong_P/YeiP_CS"/>
</dbReference>
<dbReference type="InterPro" id="IPR008991">
    <property type="entry name" value="Translation_prot_SH3-like_sf"/>
</dbReference>
<dbReference type="NCBIfam" id="NF001810">
    <property type="entry name" value="PRK00529.1"/>
    <property type="match status" value="1"/>
</dbReference>
<dbReference type="NCBIfam" id="NF003392">
    <property type="entry name" value="PRK04542.1"/>
    <property type="match status" value="1"/>
</dbReference>
<dbReference type="NCBIfam" id="TIGR02178">
    <property type="entry name" value="yeiP"/>
    <property type="match status" value="1"/>
</dbReference>
<dbReference type="PANTHER" id="PTHR30053">
    <property type="entry name" value="ELONGATION FACTOR P"/>
    <property type="match status" value="1"/>
</dbReference>
<dbReference type="PANTHER" id="PTHR30053:SF14">
    <property type="entry name" value="TRANSLATION ELONGATION FACTOR KOW-LIKE DOMAIN-CONTAINING PROTEIN"/>
    <property type="match status" value="1"/>
</dbReference>
<dbReference type="Pfam" id="PF01132">
    <property type="entry name" value="EFP"/>
    <property type="match status" value="1"/>
</dbReference>
<dbReference type="Pfam" id="PF08207">
    <property type="entry name" value="EFP_N"/>
    <property type="match status" value="1"/>
</dbReference>
<dbReference type="Pfam" id="PF09285">
    <property type="entry name" value="Elong-fact-P_C"/>
    <property type="match status" value="1"/>
</dbReference>
<dbReference type="PIRSF" id="PIRSF005901">
    <property type="entry name" value="EF-P"/>
    <property type="match status" value="1"/>
</dbReference>
<dbReference type="SMART" id="SM01185">
    <property type="entry name" value="EFP"/>
    <property type="match status" value="1"/>
</dbReference>
<dbReference type="SMART" id="SM00841">
    <property type="entry name" value="Elong-fact-P_C"/>
    <property type="match status" value="1"/>
</dbReference>
<dbReference type="SUPFAM" id="SSF50249">
    <property type="entry name" value="Nucleic acid-binding proteins"/>
    <property type="match status" value="2"/>
</dbReference>
<dbReference type="SUPFAM" id="SSF50104">
    <property type="entry name" value="Translation proteins SH3-like domain"/>
    <property type="match status" value="1"/>
</dbReference>
<dbReference type="PROSITE" id="PS01275">
    <property type="entry name" value="EFP"/>
    <property type="match status" value="1"/>
</dbReference>
<organism>
    <name type="scientific">Salmonella paratyphi B (strain ATCC BAA-1250 / SPB7)</name>
    <dbReference type="NCBI Taxonomy" id="1016998"/>
    <lineage>
        <taxon>Bacteria</taxon>
        <taxon>Pseudomonadati</taxon>
        <taxon>Pseudomonadota</taxon>
        <taxon>Gammaproteobacteria</taxon>
        <taxon>Enterobacterales</taxon>
        <taxon>Enterobacteriaceae</taxon>
        <taxon>Salmonella</taxon>
    </lineage>
</organism>
<feature type="chain" id="PRO_0000384922" description="Elongation factor P-like protein">
    <location>
        <begin position="1"/>
        <end position="190"/>
    </location>
</feature>
<accession>A9N6H3</accession>
<proteinExistence type="inferred from homology"/>
<comment type="similarity">
    <text evidence="1">Belongs to the elongation factor P family.</text>
</comment>
<comment type="sequence caution" evidence="2">
    <conflict type="erroneous initiation">
        <sequence resource="EMBL-CDS" id="ABX66217"/>
    </conflict>
</comment>
<sequence>MPRANEIKKGMVLNYNGKLLIVKDIDIQSPTARGAATLYKMRFSDVRTGLKVEERFKGDDIVDTVTLSRRGVDFSYVDGNEYVFMDKEDYTPYTFTKDQIEEELLFMPEGGMPDMQVLTWDGQLLALELPQTVDLEIVETAPGIKGASASARNKPATLSTGLVIQVPEYLSAGEKIRIHIEERRYMGRAD</sequence>
<reference key="1">
    <citation type="submission" date="2007-11" db="EMBL/GenBank/DDBJ databases">
        <authorList>
            <consortium name="The Salmonella enterica serovar Paratyphi B Genome Sequencing Project"/>
            <person name="McClelland M."/>
            <person name="Sanderson E.K."/>
            <person name="Porwollik S."/>
            <person name="Spieth J."/>
            <person name="Clifton W.S."/>
            <person name="Fulton R."/>
            <person name="Cordes M."/>
            <person name="Wollam A."/>
            <person name="Shah N."/>
            <person name="Pepin K."/>
            <person name="Bhonagiri V."/>
            <person name="Nash W."/>
            <person name="Johnson M."/>
            <person name="Thiruvilangam P."/>
            <person name="Wilson R."/>
        </authorList>
    </citation>
    <scope>NUCLEOTIDE SEQUENCE [LARGE SCALE GENOMIC DNA]</scope>
    <source>
        <strain>ATCC BAA-1250 / SPB7</strain>
    </source>
</reference>
<evidence type="ECO:0000255" key="1">
    <source>
        <dbReference type="HAMAP-Rule" id="MF_00646"/>
    </source>
</evidence>
<evidence type="ECO:0000305" key="2"/>
<gene>
    <name evidence="1" type="primary">yeiP</name>
    <name type="ordered locus">SPAB_00793</name>
</gene>
<protein>
    <recommendedName>
        <fullName evidence="1">Elongation factor P-like protein</fullName>
    </recommendedName>
</protein>